<name>RPOZ_STRGG</name>
<feature type="chain" id="PRO_1000121276" description="DNA-directed RNA polymerase subunit omega">
    <location>
        <begin position="1"/>
        <end position="90"/>
    </location>
</feature>
<comment type="function">
    <text evidence="1">Promotes RNA polymerase assembly. Latches the N- and C-terminal regions of the beta' subunit thereby facilitating its interaction with the beta and alpha subunits.</text>
</comment>
<comment type="catalytic activity">
    <reaction evidence="1">
        <text>RNA(n) + a ribonucleoside 5'-triphosphate = RNA(n+1) + diphosphate</text>
        <dbReference type="Rhea" id="RHEA:21248"/>
        <dbReference type="Rhea" id="RHEA-COMP:14527"/>
        <dbReference type="Rhea" id="RHEA-COMP:17342"/>
        <dbReference type="ChEBI" id="CHEBI:33019"/>
        <dbReference type="ChEBI" id="CHEBI:61557"/>
        <dbReference type="ChEBI" id="CHEBI:140395"/>
        <dbReference type="EC" id="2.7.7.6"/>
    </reaction>
</comment>
<comment type="subunit">
    <text evidence="1">The RNAP catalytic core consists of 2 alpha, 1 beta, 1 beta' and 1 omega subunit. When a sigma factor is associated with the core the holoenzyme is formed, which can initiate transcription.</text>
</comment>
<comment type="similarity">
    <text evidence="1">Belongs to the RNA polymerase subunit omega family.</text>
</comment>
<protein>
    <recommendedName>
        <fullName evidence="1">DNA-directed RNA polymerase subunit omega</fullName>
        <shortName evidence="1">RNAP omega subunit</shortName>
        <ecNumber evidence="1">2.7.7.6</ecNumber>
    </recommendedName>
    <alternativeName>
        <fullName evidence="1">RNA polymerase omega subunit</fullName>
    </alternativeName>
    <alternativeName>
        <fullName evidence="1">Transcriptase subunit omega</fullName>
    </alternativeName>
</protein>
<dbReference type="EC" id="2.7.7.6" evidence="1"/>
<dbReference type="EMBL" id="AP009493">
    <property type="protein sequence ID" value="BAG22885.1"/>
    <property type="molecule type" value="Genomic_DNA"/>
</dbReference>
<dbReference type="RefSeq" id="WP_003970369.1">
    <property type="nucleotide sequence ID" value="NC_010572.1"/>
</dbReference>
<dbReference type="SMR" id="B1W468"/>
<dbReference type="GeneID" id="97341327"/>
<dbReference type="KEGG" id="sgr:SGR_6056"/>
<dbReference type="eggNOG" id="COG1758">
    <property type="taxonomic scope" value="Bacteria"/>
</dbReference>
<dbReference type="HOGENOM" id="CLU_125406_1_1_11"/>
<dbReference type="Proteomes" id="UP000001685">
    <property type="component" value="Chromosome"/>
</dbReference>
<dbReference type="GO" id="GO:0000428">
    <property type="term" value="C:DNA-directed RNA polymerase complex"/>
    <property type="evidence" value="ECO:0007669"/>
    <property type="project" value="UniProtKB-KW"/>
</dbReference>
<dbReference type="GO" id="GO:0003677">
    <property type="term" value="F:DNA binding"/>
    <property type="evidence" value="ECO:0007669"/>
    <property type="project" value="UniProtKB-UniRule"/>
</dbReference>
<dbReference type="GO" id="GO:0003899">
    <property type="term" value="F:DNA-directed RNA polymerase activity"/>
    <property type="evidence" value="ECO:0007669"/>
    <property type="project" value="UniProtKB-UniRule"/>
</dbReference>
<dbReference type="GO" id="GO:0006351">
    <property type="term" value="P:DNA-templated transcription"/>
    <property type="evidence" value="ECO:0007669"/>
    <property type="project" value="UniProtKB-UniRule"/>
</dbReference>
<dbReference type="Gene3D" id="3.90.940.10">
    <property type="match status" value="1"/>
</dbReference>
<dbReference type="HAMAP" id="MF_00366">
    <property type="entry name" value="RNApol_bact_RpoZ"/>
    <property type="match status" value="1"/>
</dbReference>
<dbReference type="InterPro" id="IPR003716">
    <property type="entry name" value="DNA-dir_RNA_pol_omega"/>
</dbReference>
<dbReference type="InterPro" id="IPR006110">
    <property type="entry name" value="Pol_omega/Rpo6/RPB6"/>
</dbReference>
<dbReference type="InterPro" id="IPR036161">
    <property type="entry name" value="RPB6/omega-like_sf"/>
</dbReference>
<dbReference type="NCBIfam" id="TIGR00690">
    <property type="entry name" value="rpoZ"/>
    <property type="match status" value="1"/>
</dbReference>
<dbReference type="PANTHER" id="PTHR34476">
    <property type="entry name" value="DNA-DIRECTED RNA POLYMERASE SUBUNIT OMEGA"/>
    <property type="match status" value="1"/>
</dbReference>
<dbReference type="PANTHER" id="PTHR34476:SF1">
    <property type="entry name" value="DNA-DIRECTED RNA POLYMERASE SUBUNIT OMEGA"/>
    <property type="match status" value="1"/>
</dbReference>
<dbReference type="Pfam" id="PF01192">
    <property type="entry name" value="RNA_pol_Rpb6"/>
    <property type="match status" value="1"/>
</dbReference>
<dbReference type="SMART" id="SM01409">
    <property type="entry name" value="RNA_pol_Rpb6"/>
    <property type="match status" value="1"/>
</dbReference>
<dbReference type="SUPFAM" id="SSF63562">
    <property type="entry name" value="RPB6/omega subunit-like"/>
    <property type="match status" value="1"/>
</dbReference>
<keyword id="KW-0240">DNA-directed RNA polymerase</keyword>
<keyword id="KW-0548">Nucleotidyltransferase</keyword>
<keyword id="KW-0804">Transcription</keyword>
<keyword id="KW-0808">Transferase</keyword>
<proteinExistence type="inferred from homology"/>
<evidence type="ECO:0000255" key="1">
    <source>
        <dbReference type="HAMAP-Rule" id="MF_00366"/>
    </source>
</evidence>
<reference key="1">
    <citation type="journal article" date="2008" name="J. Bacteriol.">
        <title>Genome sequence of the streptomycin-producing microorganism Streptomyces griseus IFO 13350.</title>
        <authorList>
            <person name="Ohnishi Y."/>
            <person name="Ishikawa J."/>
            <person name="Hara H."/>
            <person name="Suzuki H."/>
            <person name="Ikenoya M."/>
            <person name="Ikeda H."/>
            <person name="Yamashita A."/>
            <person name="Hattori M."/>
            <person name="Horinouchi S."/>
        </authorList>
    </citation>
    <scope>NUCLEOTIDE SEQUENCE [LARGE SCALE GENOMIC DNA]</scope>
    <source>
        <strain>JCM 4626 / CBS 651.72 / NBRC 13350 / KCC S-0626 / ISP 5235</strain>
    </source>
</reference>
<accession>B1W468</accession>
<gene>
    <name evidence="1" type="primary">rpoZ</name>
    <name type="ordered locus">SGR_6056</name>
</gene>
<organism>
    <name type="scientific">Streptomyces griseus subsp. griseus (strain JCM 4626 / CBS 651.72 / NBRC 13350 / KCC S-0626 / ISP 5235)</name>
    <dbReference type="NCBI Taxonomy" id="455632"/>
    <lineage>
        <taxon>Bacteria</taxon>
        <taxon>Bacillati</taxon>
        <taxon>Actinomycetota</taxon>
        <taxon>Actinomycetes</taxon>
        <taxon>Kitasatosporales</taxon>
        <taxon>Streptomycetaceae</taxon>
        <taxon>Streptomyces</taxon>
    </lineage>
</organism>
<sequence>MSSSITTPEGIINPPIDELLEATDSKYSLVIYAAKRARQINAYYSQLGEGLLEYVGPLVDTHVHEKPLSIALREINAGLLTSEAIEGPAQ</sequence>